<proteinExistence type="inferred from homology"/>
<keyword id="KW-0067">ATP-binding</keyword>
<keyword id="KW-0173">Coenzyme A biosynthesis</keyword>
<keyword id="KW-0963">Cytoplasm</keyword>
<keyword id="KW-0418">Kinase</keyword>
<keyword id="KW-0547">Nucleotide-binding</keyword>
<keyword id="KW-0808">Transferase</keyword>
<accession>Q6HCU7</accession>
<evidence type="ECO:0000255" key="1">
    <source>
        <dbReference type="HAMAP-Rule" id="MF_00376"/>
    </source>
</evidence>
<gene>
    <name evidence="1" type="primary">coaE</name>
    <name type="ordered locus">BT9727_4314</name>
</gene>
<sequence length="200" mass="22604">MTVVIGLTGGIASGKSTVSQMFRELSIPVIDADIIAREVVEKGKPAYNKIVEVFGTEVLQEDGELDRPKLGSVVFYNEEKRLQLNKIVHPAVREEMNRRKEMYIKEGMQAVVLDIPLLFESKLTSLVDRVLVVAVKPHTQLERLMKRNNFSEEEATARIQSQMPLEEKVKNADEVINNDGTIMGTKTQLQAILKKWNIID</sequence>
<organism>
    <name type="scientific">Bacillus thuringiensis subsp. konkukian (strain 97-27)</name>
    <dbReference type="NCBI Taxonomy" id="281309"/>
    <lineage>
        <taxon>Bacteria</taxon>
        <taxon>Bacillati</taxon>
        <taxon>Bacillota</taxon>
        <taxon>Bacilli</taxon>
        <taxon>Bacillales</taxon>
        <taxon>Bacillaceae</taxon>
        <taxon>Bacillus</taxon>
        <taxon>Bacillus cereus group</taxon>
    </lineage>
</organism>
<reference key="1">
    <citation type="journal article" date="2006" name="J. Bacteriol.">
        <title>Pathogenomic sequence analysis of Bacillus cereus and Bacillus thuringiensis isolates closely related to Bacillus anthracis.</title>
        <authorList>
            <person name="Han C.S."/>
            <person name="Xie G."/>
            <person name="Challacombe J.F."/>
            <person name="Altherr M.R."/>
            <person name="Bhotika S.S."/>
            <person name="Bruce D."/>
            <person name="Campbell C.S."/>
            <person name="Campbell M.L."/>
            <person name="Chen J."/>
            <person name="Chertkov O."/>
            <person name="Cleland C."/>
            <person name="Dimitrijevic M."/>
            <person name="Doggett N.A."/>
            <person name="Fawcett J.J."/>
            <person name="Glavina T."/>
            <person name="Goodwin L.A."/>
            <person name="Hill K.K."/>
            <person name="Hitchcock P."/>
            <person name="Jackson P.J."/>
            <person name="Keim P."/>
            <person name="Kewalramani A.R."/>
            <person name="Longmire J."/>
            <person name="Lucas S."/>
            <person name="Malfatti S."/>
            <person name="McMurry K."/>
            <person name="Meincke L.J."/>
            <person name="Misra M."/>
            <person name="Moseman B.L."/>
            <person name="Mundt M."/>
            <person name="Munk A.C."/>
            <person name="Okinaka R.T."/>
            <person name="Parson-Quintana B."/>
            <person name="Reilly L.P."/>
            <person name="Richardson P."/>
            <person name="Robinson D.L."/>
            <person name="Rubin E."/>
            <person name="Saunders E."/>
            <person name="Tapia R."/>
            <person name="Tesmer J.G."/>
            <person name="Thayer N."/>
            <person name="Thompson L.S."/>
            <person name="Tice H."/>
            <person name="Ticknor L.O."/>
            <person name="Wills P.L."/>
            <person name="Brettin T.S."/>
            <person name="Gilna P."/>
        </authorList>
    </citation>
    <scope>NUCLEOTIDE SEQUENCE [LARGE SCALE GENOMIC DNA]</scope>
    <source>
        <strain>97-27</strain>
    </source>
</reference>
<comment type="function">
    <text evidence="1">Catalyzes the phosphorylation of the 3'-hydroxyl group of dephosphocoenzyme A to form coenzyme A.</text>
</comment>
<comment type="catalytic activity">
    <reaction evidence="1">
        <text>3'-dephospho-CoA + ATP = ADP + CoA + H(+)</text>
        <dbReference type="Rhea" id="RHEA:18245"/>
        <dbReference type="ChEBI" id="CHEBI:15378"/>
        <dbReference type="ChEBI" id="CHEBI:30616"/>
        <dbReference type="ChEBI" id="CHEBI:57287"/>
        <dbReference type="ChEBI" id="CHEBI:57328"/>
        <dbReference type="ChEBI" id="CHEBI:456216"/>
        <dbReference type="EC" id="2.7.1.24"/>
    </reaction>
</comment>
<comment type="pathway">
    <text evidence="1">Cofactor biosynthesis; coenzyme A biosynthesis; CoA from (R)-pantothenate: step 5/5.</text>
</comment>
<comment type="subcellular location">
    <subcellularLocation>
        <location evidence="1">Cytoplasm</location>
    </subcellularLocation>
</comment>
<comment type="similarity">
    <text evidence="1">Belongs to the CoaE family.</text>
</comment>
<dbReference type="EC" id="2.7.1.24" evidence="1"/>
<dbReference type="EMBL" id="AE017355">
    <property type="protein sequence ID" value="AAT63542.1"/>
    <property type="molecule type" value="Genomic_DNA"/>
</dbReference>
<dbReference type="RefSeq" id="WP_000219305.1">
    <property type="nucleotide sequence ID" value="NC_005957.1"/>
</dbReference>
<dbReference type="RefSeq" id="YP_038629.1">
    <property type="nucleotide sequence ID" value="NC_005957.1"/>
</dbReference>
<dbReference type="SMR" id="Q6HCU7"/>
<dbReference type="KEGG" id="btk:BT9727_4314"/>
<dbReference type="PATRIC" id="fig|281309.8.peg.4598"/>
<dbReference type="HOGENOM" id="CLU_057180_0_0_9"/>
<dbReference type="UniPathway" id="UPA00241">
    <property type="reaction ID" value="UER00356"/>
</dbReference>
<dbReference type="Proteomes" id="UP000001301">
    <property type="component" value="Chromosome"/>
</dbReference>
<dbReference type="GO" id="GO:0005737">
    <property type="term" value="C:cytoplasm"/>
    <property type="evidence" value="ECO:0007669"/>
    <property type="project" value="UniProtKB-SubCell"/>
</dbReference>
<dbReference type="GO" id="GO:0005524">
    <property type="term" value="F:ATP binding"/>
    <property type="evidence" value="ECO:0007669"/>
    <property type="project" value="UniProtKB-UniRule"/>
</dbReference>
<dbReference type="GO" id="GO:0004140">
    <property type="term" value="F:dephospho-CoA kinase activity"/>
    <property type="evidence" value="ECO:0007669"/>
    <property type="project" value="UniProtKB-UniRule"/>
</dbReference>
<dbReference type="GO" id="GO:0015937">
    <property type="term" value="P:coenzyme A biosynthetic process"/>
    <property type="evidence" value="ECO:0007669"/>
    <property type="project" value="UniProtKB-UniRule"/>
</dbReference>
<dbReference type="CDD" id="cd02022">
    <property type="entry name" value="DPCK"/>
    <property type="match status" value="1"/>
</dbReference>
<dbReference type="FunFam" id="3.40.50.300:FF:000485">
    <property type="entry name" value="Dephospho-CoA kinase CAB5"/>
    <property type="match status" value="1"/>
</dbReference>
<dbReference type="Gene3D" id="3.40.50.300">
    <property type="entry name" value="P-loop containing nucleotide triphosphate hydrolases"/>
    <property type="match status" value="1"/>
</dbReference>
<dbReference type="HAMAP" id="MF_00376">
    <property type="entry name" value="Dephospho_CoA_kinase"/>
    <property type="match status" value="1"/>
</dbReference>
<dbReference type="InterPro" id="IPR001977">
    <property type="entry name" value="Depp_CoAkinase"/>
</dbReference>
<dbReference type="InterPro" id="IPR027417">
    <property type="entry name" value="P-loop_NTPase"/>
</dbReference>
<dbReference type="NCBIfam" id="TIGR00152">
    <property type="entry name" value="dephospho-CoA kinase"/>
    <property type="match status" value="1"/>
</dbReference>
<dbReference type="PANTHER" id="PTHR10695:SF46">
    <property type="entry name" value="BIFUNCTIONAL COENZYME A SYNTHASE-RELATED"/>
    <property type="match status" value="1"/>
</dbReference>
<dbReference type="PANTHER" id="PTHR10695">
    <property type="entry name" value="DEPHOSPHO-COA KINASE-RELATED"/>
    <property type="match status" value="1"/>
</dbReference>
<dbReference type="Pfam" id="PF01121">
    <property type="entry name" value="CoaE"/>
    <property type="match status" value="1"/>
</dbReference>
<dbReference type="SUPFAM" id="SSF52540">
    <property type="entry name" value="P-loop containing nucleoside triphosphate hydrolases"/>
    <property type="match status" value="1"/>
</dbReference>
<dbReference type="PROSITE" id="PS51219">
    <property type="entry name" value="DPCK"/>
    <property type="match status" value="1"/>
</dbReference>
<protein>
    <recommendedName>
        <fullName evidence="1">Dephospho-CoA kinase</fullName>
        <ecNumber evidence="1">2.7.1.24</ecNumber>
    </recommendedName>
    <alternativeName>
        <fullName evidence="1">Dephosphocoenzyme A kinase</fullName>
    </alternativeName>
</protein>
<name>COAE_BACHK</name>
<feature type="chain" id="PRO_0000243259" description="Dephospho-CoA kinase">
    <location>
        <begin position="1"/>
        <end position="200"/>
    </location>
</feature>
<feature type="domain" description="DPCK" evidence="1">
    <location>
        <begin position="4"/>
        <end position="200"/>
    </location>
</feature>
<feature type="binding site" evidence="1">
    <location>
        <begin position="12"/>
        <end position="17"/>
    </location>
    <ligand>
        <name>ATP</name>
        <dbReference type="ChEBI" id="CHEBI:30616"/>
    </ligand>
</feature>